<sequence>PIQLNPAPDGSAVNGTSSAETNLEALQKKLEELELDEQQRKRLEAFLTQKQKVGELKDDDFEKISELGAGNGGVVFKVSHKPSGLIMARKLIHLEIKPAIRNQIIRELQVLHECNSPYIVGFYGAFYSDGEISICMEHMDGGSLDQVLKKAGRIPEQILGKVSIAVIKGLTYLREKHKIMHRDVKPSNILVNSRGEIKLCDFGVSGQLIDSMANSFVGTRSYMSPERLQGTHYSVQSDIWSMGLSLVEMAIGRYPIPPPDSKELELMFGCPVEGDSPVTETSPRQRAPGRPMSSYGSDSRPPMAIFELLDYIVNEPPPKLPNGVFGSEFQDFVNKCLIKNPAERADLKQLMIHAFIKRSEAEEVDFAGWLCSTIGLNQPSTPTHAAGV</sequence>
<name>MP2K1_SERCA</name>
<dbReference type="EC" id="2.7.12.2"/>
<dbReference type="EMBL" id="L35244">
    <property type="protein sequence ID" value="AAA49539.1"/>
    <property type="molecule type" value="mRNA"/>
</dbReference>
<dbReference type="SMR" id="Q91447"/>
<dbReference type="Proteomes" id="UP000694409">
    <property type="component" value="Unplaced"/>
</dbReference>
<dbReference type="GO" id="GO:0005813">
    <property type="term" value="C:centrosome"/>
    <property type="evidence" value="ECO:0007669"/>
    <property type="project" value="UniProtKB-SubCell"/>
</dbReference>
<dbReference type="GO" id="GO:0005769">
    <property type="term" value="C:early endosome"/>
    <property type="evidence" value="ECO:0007669"/>
    <property type="project" value="UniProtKB-ARBA"/>
</dbReference>
<dbReference type="GO" id="GO:0005925">
    <property type="term" value="C:focal adhesion"/>
    <property type="evidence" value="ECO:0007669"/>
    <property type="project" value="UniProtKB-ARBA"/>
</dbReference>
<dbReference type="GO" id="GO:0005770">
    <property type="term" value="C:late endosome"/>
    <property type="evidence" value="ECO:0007669"/>
    <property type="project" value="UniProtKB-ARBA"/>
</dbReference>
<dbReference type="GO" id="GO:0005739">
    <property type="term" value="C:mitochondrion"/>
    <property type="evidence" value="ECO:0007669"/>
    <property type="project" value="UniProtKB-ARBA"/>
</dbReference>
<dbReference type="GO" id="GO:0005634">
    <property type="term" value="C:nucleus"/>
    <property type="evidence" value="ECO:0007669"/>
    <property type="project" value="UniProtKB-SubCell"/>
</dbReference>
<dbReference type="GO" id="GO:0005524">
    <property type="term" value="F:ATP binding"/>
    <property type="evidence" value="ECO:0007669"/>
    <property type="project" value="UniProtKB-KW"/>
</dbReference>
<dbReference type="GO" id="GO:0004708">
    <property type="term" value="F:MAP kinase kinase activity"/>
    <property type="evidence" value="ECO:0007669"/>
    <property type="project" value="UniProtKB-EC"/>
</dbReference>
<dbReference type="GO" id="GO:0106310">
    <property type="term" value="F:protein serine kinase activity"/>
    <property type="evidence" value="ECO:0007669"/>
    <property type="project" value="RHEA"/>
</dbReference>
<dbReference type="GO" id="GO:0004674">
    <property type="term" value="F:protein serine/threonine kinase activity"/>
    <property type="evidence" value="ECO:0007669"/>
    <property type="project" value="UniProtKB-KW"/>
</dbReference>
<dbReference type="GO" id="GO:0004713">
    <property type="term" value="F:protein tyrosine kinase activity"/>
    <property type="evidence" value="ECO:0007669"/>
    <property type="project" value="UniProtKB-KW"/>
</dbReference>
<dbReference type="GO" id="GO:2000641">
    <property type="term" value="P:regulation of early endosome to late endosome transport"/>
    <property type="evidence" value="ECO:0007669"/>
    <property type="project" value="UniProtKB-ARBA"/>
</dbReference>
<dbReference type="GO" id="GO:0090170">
    <property type="term" value="P:regulation of Golgi inheritance"/>
    <property type="evidence" value="ECO:0007669"/>
    <property type="project" value="UniProtKB-ARBA"/>
</dbReference>
<dbReference type="GO" id="GO:0032872">
    <property type="term" value="P:regulation of stress-activated MAPK cascade"/>
    <property type="evidence" value="ECO:0007669"/>
    <property type="project" value="UniProtKB-ARBA"/>
</dbReference>
<dbReference type="CDD" id="cd06650">
    <property type="entry name" value="PKc_MEK1"/>
    <property type="match status" value="1"/>
</dbReference>
<dbReference type="FunFam" id="1.10.510.10:FF:000115">
    <property type="entry name" value="Dual specificity mitogen-activated protein kinase kinase 1"/>
    <property type="match status" value="1"/>
</dbReference>
<dbReference type="FunFam" id="3.30.200.20:FF:000100">
    <property type="entry name" value="Dual specificity mitogen-activated protein kinase kinase 1"/>
    <property type="match status" value="1"/>
</dbReference>
<dbReference type="Gene3D" id="3.30.200.20">
    <property type="entry name" value="Phosphorylase Kinase, domain 1"/>
    <property type="match status" value="1"/>
</dbReference>
<dbReference type="Gene3D" id="1.10.510.10">
    <property type="entry name" value="Transferase(Phosphotransferase) domain 1"/>
    <property type="match status" value="1"/>
</dbReference>
<dbReference type="InterPro" id="IPR011009">
    <property type="entry name" value="Kinase-like_dom_sf"/>
</dbReference>
<dbReference type="InterPro" id="IPR050915">
    <property type="entry name" value="MAP_kinase_kinase"/>
</dbReference>
<dbReference type="InterPro" id="IPR000719">
    <property type="entry name" value="Prot_kinase_dom"/>
</dbReference>
<dbReference type="InterPro" id="IPR017441">
    <property type="entry name" value="Protein_kinase_ATP_BS"/>
</dbReference>
<dbReference type="InterPro" id="IPR008271">
    <property type="entry name" value="Ser/Thr_kinase_AS"/>
</dbReference>
<dbReference type="PANTHER" id="PTHR47448">
    <property type="entry name" value="DUAL SPECIFICITY MITOGEN-ACTIVATED PROTEIN KINASE KINASE DSOR1-LIKE PROTEIN"/>
    <property type="match status" value="1"/>
</dbReference>
<dbReference type="PANTHER" id="PTHR47448:SF2">
    <property type="entry name" value="MITOGEN-ACTIVATED PROTEIN KINASE KINASE 1"/>
    <property type="match status" value="1"/>
</dbReference>
<dbReference type="Pfam" id="PF00069">
    <property type="entry name" value="Pkinase"/>
    <property type="match status" value="1"/>
</dbReference>
<dbReference type="SMART" id="SM00220">
    <property type="entry name" value="S_TKc"/>
    <property type="match status" value="1"/>
</dbReference>
<dbReference type="SUPFAM" id="SSF56112">
    <property type="entry name" value="Protein kinase-like (PK-like)"/>
    <property type="match status" value="1"/>
</dbReference>
<dbReference type="PROSITE" id="PS00107">
    <property type="entry name" value="PROTEIN_KINASE_ATP"/>
    <property type="match status" value="1"/>
</dbReference>
<dbReference type="PROSITE" id="PS50011">
    <property type="entry name" value="PROTEIN_KINASE_DOM"/>
    <property type="match status" value="1"/>
</dbReference>
<dbReference type="PROSITE" id="PS00108">
    <property type="entry name" value="PROTEIN_KINASE_ST"/>
    <property type="match status" value="1"/>
</dbReference>
<comment type="function">
    <text evidence="1">Dual specificity protein kinase which acts as an essential component of the MAP kinase signal transduction pathway. Binding of extracellular ligands such as growth factors, cytokines and hormones to their cell-surface receptors activates RAS and this initiates RAF1 activation. RAF1 then further activates the dual-specificity protein kinases MAP2K1/MEK1 and MAP2K2/MEK2. Both MAP2K1/MEK1 and MAP2K2/MEK2 function specifically in the MAPK/ERK cascade, and catalyze the concomitant phosphorylation of a threonine and a tyrosine residue in a Thr-Glu-Tyr sequence located in the extracellular signal-regulated kinases MAPK3/ERK1 and MAPK1/ERK2, leading to their activation and further transduction of the signal within the MAPK/ERK cascade. Depending on the cellular context, this pathway mediates diverse biological functions such as cell growth, adhesion, survival and differentiation predominantly through the regulation of transcription, metabolism and cytoskeletal rearrangements (By similarity).</text>
</comment>
<comment type="catalytic activity">
    <reaction>
        <text>L-seryl-[protein] + ATP = O-phospho-L-seryl-[protein] + ADP + H(+)</text>
        <dbReference type="Rhea" id="RHEA:17989"/>
        <dbReference type="Rhea" id="RHEA-COMP:9863"/>
        <dbReference type="Rhea" id="RHEA-COMP:11604"/>
        <dbReference type="ChEBI" id="CHEBI:15378"/>
        <dbReference type="ChEBI" id="CHEBI:29999"/>
        <dbReference type="ChEBI" id="CHEBI:30616"/>
        <dbReference type="ChEBI" id="CHEBI:83421"/>
        <dbReference type="ChEBI" id="CHEBI:456216"/>
        <dbReference type="EC" id="2.7.12.2"/>
    </reaction>
</comment>
<comment type="catalytic activity">
    <reaction>
        <text>L-threonyl-[protein] + ATP = O-phospho-L-threonyl-[protein] + ADP + H(+)</text>
        <dbReference type="Rhea" id="RHEA:46608"/>
        <dbReference type="Rhea" id="RHEA-COMP:11060"/>
        <dbReference type="Rhea" id="RHEA-COMP:11605"/>
        <dbReference type="ChEBI" id="CHEBI:15378"/>
        <dbReference type="ChEBI" id="CHEBI:30013"/>
        <dbReference type="ChEBI" id="CHEBI:30616"/>
        <dbReference type="ChEBI" id="CHEBI:61977"/>
        <dbReference type="ChEBI" id="CHEBI:456216"/>
        <dbReference type="EC" id="2.7.12.2"/>
    </reaction>
</comment>
<comment type="catalytic activity">
    <reaction>
        <text>L-tyrosyl-[protein] + ATP = O-phospho-L-tyrosyl-[protein] + ADP + H(+)</text>
        <dbReference type="Rhea" id="RHEA:10596"/>
        <dbReference type="Rhea" id="RHEA-COMP:10136"/>
        <dbReference type="Rhea" id="RHEA-COMP:20101"/>
        <dbReference type="ChEBI" id="CHEBI:15378"/>
        <dbReference type="ChEBI" id="CHEBI:30616"/>
        <dbReference type="ChEBI" id="CHEBI:46858"/>
        <dbReference type="ChEBI" id="CHEBI:61978"/>
        <dbReference type="ChEBI" id="CHEBI:456216"/>
        <dbReference type="EC" id="2.7.12.2"/>
    </reaction>
</comment>
<comment type="subcellular location">
    <subcellularLocation>
        <location evidence="1">Cytoplasm</location>
        <location evidence="1">Cytoskeleton</location>
        <location evidence="1">Microtubule organizing center</location>
        <location evidence="1">Centrosome</location>
    </subcellularLocation>
    <subcellularLocation>
        <location evidence="1">Cytoplasm</location>
        <location evidence="1">Cytoskeleton</location>
        <location evidence="1">Microtubule organizing center</location>
        <location evidence="1">Spindle pole body</location>
    </subcellularLocation>
    <subcellularLocation>
        <location evidence="1">Cytoplasm</location>
    </subcellularLocation>
    <subcellularLocation>
        <location evidence="1">Nucleus</location>
    </subcellularLocation>
</comment>
<comment type="PTM">
    <text evidence="1">MAPKK is itself dependent on Ser/Thr phosphorylation for activity catalyzed by MAP kinase kinase kinases (RAF or MEKK1).</text>
</comment>
<comment type="similarity">
    <text evidence="5">Belongs to the protein kinase superfamily. STE Ser/Thr protein kinase family. MAP kinase kinase subfamily.</text>
</comment>
<feature type="chain" id="PRO_0000086370" description="Dual specificity mitogen-activated protein kinase kinase 1">
    <location>
        <begin position="1" status="less than"/>
        <end position="388"/>
    </location>
</feature>
<feature type="domain" description="Protein kinase" evidence="2">
    <location>
        <begin position="61"/>
        <end position="356"/>
    </location>
</feature>
<feature type="region of interest" description="Disordered" evidence="4">
    <location>
        <begin position="1"/>
        <end position="20"/>
    </location>
</feature>
<feature type="region of interest" description="Disordered" evidence="4">
    <location>
        <begin position="275"/>
        <end position="299"/>
    </location>
</feature>
<feature type="active site" description="Proton acceptor" evidence="2 3">
    <location>
        <position position="183"/>
    </location>
</feature>
<feature type="binding site" evidence="2">
    <location>
        <begin position="67"/>
        <end position="75"/>
    </location>
    <ligand>
        <name>ATP</name>
        <dbReference type="ChEBI" id="CHEBI:30616"/>
    </ligand>
</feature>
<feature type="binding site" evidence="2">
    <location>
        <position position="90"/>
    </location>
    <ligand>
        <name>ATP</name>
        <dbReference type="ChEBI" id="CHEBI:30616"/>
    </ligand>
</feature>
<feature type="modified residue" description="Phosphoserine; by RAF" evidence="1">
    <location>
        <position position="211"/>
    </location>
</feature>
<feature type="modified residue" description="Phosphoserine; by RAF" evidence="1">
    <location>
        <position position="215"/>
    </location>
</feature>
<feature type="non-terminal residue">
    <location>
        <position position="1"/>
    </location>
</feature>
<reference key="1">
    <citation type="submission" date="1994-09" db="EMBL/GenBank/DDBJ databases">
        <authorList>
            <person name="George J.M."/>
            <person name="Jin H."/>
            <person name="Woods W.S."/>
            <person name="Nottebohm F."/>
            <person name="Clayton D.F."/>
        </authorList>
    </citation>
    <scope>NUCLEOTIDE SEQUENCE [MRNA]</scope>
    <source>
        <tissue>Brain</tissue>
    </source>
</reference>
<accession>Q91447</accession>
<proteinExistence type="evidence at transcript level"/>
<keyword id="KW-0067">ATP-binding</keyword>
<keyword id="KW-0963">Cytoplasm</keyword>
<keyword id="KW-0206">Cytoskeleton</keyword>
<keyword id="KW-0418">Kinase</keyword>
<keyword id="KW-0547">Nucleotide-binding</keyword>
<keyword id="KW-0539">Nucleus</keyword>
<keyword id="KW-0597">Phosphoprotein</keyword>
<keyword id="KW-1185">Reference proteome</keyword>
<keyword id="KW-0723">Serine/threonine-protein kinase</keyword>
<keyword id="KW-0808">Transferase</keyword>
<keyword id="KW-0829">Tyrosine-protein kinase</keyword>
<gene>
    <name type="primary">MAP2K1</name>
    <name type="synonym">MEK1</name>
    <name type="synonym">PRKMK1</name>
</gene>
<organism>
    <name type="scientific">Serinus canaria</name>
    <name type="common">Island canary</name>
    <name type="synonym">Fringilla canaria</name>
    <dbReference type="NCBI Taxonomy" id="9135"/>
    <lineage>
        <taxon>Eukaryota</taxon>
        <taxon>Metazoa</taxon>
        <taxon>Chordata</taxon>
        <taxon>Craniata</taxon>
        <taxon>Vertebrata</taxon>
        <taxon>Euteleostomi</taxon>
        <taxon>Archelosauria</taxon>
        <taxon>Archosauria</taxon>
        <taxon>Dinosauria</taxon>
        <taxon>Saurischia</taxon>
        <taxon>Theropoda</taxon>
        <taxon>Coelurosauria</taxon>
        <taxon>Aves</taxon>
        <taxon>Neognathae</taxon>
        <taxon>Neoaves</taxon>
        <taxon>Telluraves</taxon>
        <taxon>Australaves</taxon>
        <taxon>Passeriformes</taxon>
        <taxon>Passeroidea</taxon>
        <taxon>Fringillidae</taxon>
        <taxon>Carduelinae</taxon>
        <taxon>Serinus</taxon>
    </lineage>
</organism>
<protein>
    <recommendedName>
        <fullName>Dual specificity mitogen-activated protein kinase kinase 1</fullName>
        <shortName>MAP kinase kinase 1</shortName>
        <shortName>MAPKK 1</shortName>
        <ecNumber>2.7.12.2</ecNumber>
    </recommendedName>
    <alternativeName>
        <fullName>ERK activator kinase 1</fullName>
    </alternativeName>
    <alternativeName>
        <fullName>MAPK/ERK kinase 1</fullName>
        <shortName>MEK1</shortName>
    </alternativeName>
</protein>
<evidence type="ECO:0000250" key="1"/>
<evidence type="ECO:0000255" key="2">
    <source>
        <dbReference type="PROSITE-ProRule" id="PRU00159"/>
    </source>
</evidence>
<evidence type="ECO:0000255" key="3">
    <source>
        <dbReference type="PROSITE-ProRule" id="PRU10027"/>
    </source>
</evidence>
<evidence type="ECO:0000256" key="4">
    <source>
        <dbReference type="SAM" id="MobiDB-lite"/>
    </source>
</evidence>
<evidence type="ECO:0000305" key="5"/>